<comment type="function">
    <text evidence="6 7">Transcription factor that, together with JKD, regulates tissue boundaries and asymmetric cell division in roots by a rapid up-regulation of 'SCARECROW' (SCR), thus controlling the nuclear localization of 'SHORT-ROOT' (SHR) and restricting its action (PubMed:25829440). Confines CYCD6 expression to the cortex-endodermis initial/daughter (CEI/CEID) tissues (PubMed:25829440). Binds DNA via its zinc fingers (PubMed:24821766). Recognizes and binds to SCL3 promoter sequence 5'-AGACAA-3' to promote its expression when in complex with RGA (PubMed:24821766).</text>
</comment>
<comment type="subunit">
    <text evidence="6">Binds to RGA and SCL3 competitively in the nucleus.</text>
</comment>
<comment type="subcellular location">
    <subcellularLocation>
        <location evidence="4 6 7">Nucleus</location>
    </subcellularLocation>
</comment>
<comment type="tissue specificity">
    <text evidence="7">Expressed in roots, especially in vascular initials, cortex, endodermis, and quiescent center (QC).</text>
</comment>
<comment type="disruption phenotype">
    <text evidence="7">After germination, roots display aberrant divisions in the quiescent center (QC), but normal radial cellular organization. Reduced SCR expression in the quiescent center (QC). The double mutant jkd bib exhibits ectopic divisions in the ground tissue (GT) region leading to an additional layer at the root pole of mature embryos and seedlings, thus resulting in roots with wider meristems and additional layers between the central stele and the epidermis as well as an increased cell number per layer leading to unclear morphological tissue distinctions; in root meristems, only a dynamic subset of layers expresses SCR, restricted to the stele-adjacent layer at the root pole, and specific to ectopic dividing tissues. In the double mutant, SHR accumulates in the expanded inner vascular tissue and in all surrounding cell layers, including epidermis, with inefficient nuclear retention. The quadruple mutant line jkd mgp nuc scr has short root meristems, lacks endodermis and miss Casparian strip.</text>
</comment>
<comment type="sequence caution" evidence="11">
    <conflict type="erroneous gene model prediction">
        <sequence resource="EMBL-CDS" id="CAB72475"/>
    </conflict>
</comment>
<sequence length="446" mass="49941">MMMPDDHHPLSFPSYVLHQEHIAPNPNPNPNPTSSNSAKRKRNLPGNPDPDAEVIALSPNSLMTTNRFICEVCNKGFKRDQNLQLHRRGHNLPWKLKQRTNKEQVKKKVYICPEKTCVHHDPARALGDLTGIKKHFSRKHGEKKWKCDKCSKKYAVMSDWKAHSKICGTKEYRCDCGTLFSRKDSFITHRAFCDALAEESARFVSVPPAPAYLNNALDVEVNHGNINQNHQQRQLNTTSSQLDQPGFNTNRNNIAFLGQTLPTNVFASSSSPSPRSASDSLQNLWHLQGQSSHQWLLNENNNNNNNILQRGISKNQEEHEMKNVISNGSLFSSEARNNTNNYNQNGGQIASMSATALLQKAAQMGSKRSSSSSSNSKTFGLMTSIFNNKQAENIKTKEVDERGFTRDFLGVGSQHRSWPLLMVNHNLPDSSPPASTDGTPTADMNQ</sequence>
<dbReference type="EMBL" id="AJ621493">
    <property type="protein sequence ID" value="CAF18562.1"/>
    <property type="molecule type" value="mRNA"/>
</dbReference>
<dbReference type="EMBL" id="AL132953">
    <property type="protein sequence ID" value="CAB72475.1"/>
    <property type="status" value="ALT_SEQ"/>
    <property type="molecule type" value="Genomic_DNA"/>
</dbReference>
<dbReference type="EMBL" id="CP002686">
    <property type="protein sequence ID" value="AEE78015.1"/>
    <property type="molecule type" value="Genomic_DNA"/>
</dbReference>
<dbReference type="EMBL" id="CP002686">
    <property type="protein sequence ID" value="ANM65354.1"/>
    <property type="molecule type" value="Genomic_DNA"/>
</dbReference>
<dbReference type="EMBL" id="AF428302">
    <property type="protein sequence ID" value="AAL16134.1"/>
    <property type="molecule type" value="mRNA"/>
</dbReference>
<dbReference type="EMBL" id="AY143936">
    <property type="protein sequence ID" value="AAN28875.1"/>
    <property type="molecule type" value="mRNA"/>
</dbReference>
<dbReference type="PIR" id="T47466">
    <property type="entry name" value="T47466"/>
</dbReference>
<dbReference type="RefSeq" id="NP_001327332.1">
    <property type="nucleotide sequence ID" value="NM_001339201.1"/>
</dbReference>
<dbReference type="RefSeq" id="NP_566877.1">
    <property type="nucleotide sequence ID" value="NM_114395.4"/>
</dbReference>
<dbReference type="PDB" id="6KPD">
    <property type="method" value="X-ray"/>
    <property type="resolution" value="3.20 A"/>
    <property type="chains" value="B=348-383"/>
</dbReference>
<dbReference type="PDBsum" id="6KPD"/>
<dbReference type="SMR" id="Q944L3"/>
<dbReference type="FunCoup" id="Q944L3">
    <property type="interactions" value="4"/>
</dbReference>
<dbReference type="STRING" id="3702.Q944L3"/>
<dbReference type="iPTMnet" id="Q944L3"/>
<dbReference type="PaxDb" id="3702-AT3G45260.1"/>
<dbReference type="ProteomicsDB" id="228790"/>
<dbReference type="EnsemblPlants" id="AT3G45260.1">
    <property type="protein sequence ID" value="AT3G45260.1"/>
    <property type="gene ID" value="AT3G45260"/>
</dbReference>
<dbReference type="EnsemblPlants" id="AT3G45260.2">
    <property type="protein sequence ID" value="AT3G45260.2"/>
    <property type="gene ID" value="AT3G45260"/>
</dbReference>
<dbReference type="GeneID" id="823664"/>
<dbReference type="Gramene" id="AT3G45260.1">
    <property type="protein sequence ID" value="AT3G45260.1"/>
    <property type="gene ID" value="AT3G45260"/>
</dbReference>
<dbReference type="Gramene" id="AT3G45260.2">
    <property type="protein sequence ID" value="AT3G45260.2"/>
    <property type="gene ID" value="AT3G45260"/>
</dbReference>
<dbReference type="KEGG" id="ath:AT3G45260"/>
<dbReference type="Araport" id="AT3G45260"/>
<dbReference type="TAIR" id="AT3G45260">
    <property type="gene designation" value="BIB"/>
</dbReference>
<dbReference type="eggNOG" id="KOG1721">
    <property type="taxonomic scope" value="Eukaryota"/>
</dbReference>
<dbReference type="HOGENOM" id="CLU_014578_3_1_1"/>
<dbReference type="InParanoid" id="Q944L3"/>
<dbReference type="OMA" id="MMMPDDH"/>
<dbReference type="PhylomeDB" id="Q944L3"/>
<dbReference type="PRO" id="PR:Q944L3"/>
<dbReference type="Proteomes" id="UP000006548">
    <property type="component" value="Chromosome 3"/>
</dbReference>
<dbReference type="ExpressionAtlas" id="Q944L3">
    <property type="expression patterns" value="baseline and differential"/>
</dbReference>
<dbReference type="GO" id="GO:0005634">
    <property type="term" value="C:nucleus"/>
    <property type="evidence" value="ECO:0000314"/>
    <property type="project" value="UniProtKB"/>
</dbReference>
<dbReference type="GO" id="GO:0003700">
    <property type="term" value="F:DNA-binding transcription factor activity"/>
    <property type="evidence" value="ECO:0000314"/>
    <property type="project" value="UniProtKB"/>
</dbReference>
<dbReference type="GO" id="GO:0043565">
    <property type="term" value="F:sequence-specific DNA binding"/>
    <property type="evidence" value="ECO:0000314"/>
    <property type="project" value="UniProtKB"/>
</dbReference>
<dbReference type="GO" id="GO:0008270">
    <property type="term" value="F:zinc ion binding"/>
    <property type="evidence" value="ECO:0007669"/>
    <property type="project" value="UniProtKB-KW"/>
</dbReference>
<dbReference type="GO" id="GO:0045893">
    <property type="term" value="P:positive regulation of DNA-templated transcription"/>
    <property type="evidence" value="ECO:0000314"/>
    <property type="project" value="UniProtKB"/>
</dbReference>
<dbReference type="GO" id="GO:0034504">
    <property type="term" value="P:protein localization to nucleus"/>
    <property type="evidence" value="ECO:0000315"/>
    <property type="project" value="UniProtKB"/>
</dbReference>
<dbReference type="GO" id="GO:0006355">
    <property type="term" value="P:regulation of DNA-templated transcription"/>
    <property type="evidence" value="ECO:0000304"/>
    <property type="project" value="TAIR"/>
</dbReference>
<dbReference type="GO" id="GO:0010075">
    <property type="term" value="P:regulation of meristem growth"/>
    <property type="evidence" value="ECO:0000315"/>
    <property type="project" value="UniProtKB"/>
</dbReference>
<dbReference type="FunFam" id="3.30.160.60:FF:000554">
    <property type="entry name" value="protein indeterminate-domain 12-like"/>
    <property type="match status" value="1"/>
</dbReference>
<dbReference type="FunFam" id="3.30.160.60:FF:000131">
    <property type="entry name" value="protein indeterminate-domain 5, chloroplastic-like"/>
    <property type="match status" value="1"/>
</dbReference>
<dbReference type="Gene3D" id="3.30.160.60">
    <property type="entry name" value="Classic Zinc Finger"/>
    <property type="match status" value="2"/>
</dbReference>
<dbReference type="InterPro" id="IPR055187">
    <property type="entry name" value="C2CH-3rd_BIRD-IDD"/>
</dbReference>
<dbReference type="InterPro" id="IPR055185">
    <property type="entry name" value="C2CH-4th_BIRD-IDD"/>
</dbReference>
<dbReference type="InterPro" id="IPR055186">
    <property type="entry name" value="C2H2-2nd_BIRD-IDD"/>
</dbReference>
<dbReference type="InterPro" id="IPR031140">
    <property type="entry name" value="IDD1-16"/>
</dbReference>
<dbReference type="InterPro" id="IPR036236">
    <property type="entry name" value="Znf_C2H2_sf"/>
</dbReference>
<dbReference type="InterPro" id="IPR013087">
    <property type="entry name" value="Znf_C2H2_type"/>
</dbReference>
<dbReference type="PANTHER" id="PTHR10593">
    <property type="entry name" value="SERINE/THREONINE-PROTEIN KINASE RIO"/>
    <property type="match status" value="1"/>
</dbReference>
<dbReference type="PANTHER" id="PTHR10593:SF228">
    <property type="entry name" value="ZINC FINGER PROTEIN BALDIBIS"/>
    <property type="match status" value="1"/>
</dbReference>
<dbReference type="Pfam" id="PF22995">
    <property type="entry name" value="C2CH-3rd_BIRD-IDD"/>
    <property type="match status" value="1"/>
</dbReference>
<dbReference type="Pfam" id="PF22992">
    <property type="entry name" value="C2CH-4th_BIRD-IDD"/>
    <property type="match status" value="1"/>
</dbReference>
<dbReference type="Pfam" id="PF22996">
    <property type="entry name" value="C2H2-2nd_BIRD-IDD"/>
    <property type="match status" value="1"/>
</dbReference>
<dbReference type="Pfam" id="PF00096">
    <property type="entry name" value="zf-C2H2"/>
    <property type="match status" value="1"/>
</dbReference>
<dbReference type="SMART" id="SM00355">
    <property type="entry name" value="ZnF_C2H2"/>
    <property type="match status" value="3"/>
</dbReference>
<dbReference type="SUPFAM" id="SSF57667">
    <property type="entry name" value="beta-beta-alpha zinc fingers"/>
    <property type="match status" value="1"/>
</dbReference>
<dbReference type="PROSITE" id="PS00028">
    <property type="entry name" value="ZINC_FINGER_C2H2_1"/>
    <property type="match status" value="1"/>
</dbReference>
<dbReference type="PROSITE" id="PS50157">
    <property type="entry name" value="ZINC_FINGER_C2H2_2"/>
    <property type="match status" value="1"/>
</dbReference>
<feature type="chain" id="PRO_0000431544" description="Zinc finger protein BALDIBIS">
    <location>
        <begin position="1"/>
        <end position="446"/>
    </location>
</feature>
<feature type="zinc finger region" description="C2H2-type 1" evidence="3">
    <location>
        <begin position="68"/>
        <end position="90"/>
    </location>
</feature>
<feature type="zinc finger region" description="C2H2-type 2" evidence="11">
    <location>
        <begin position="110"/>
        <end position="140"/>
    </location>
</feature>
<feature type="zinc finger region" description="C2H2-type 2; degenerate" evidence="3">
    <location>
        <begin position="145"/>
        <end position="168"/>
    </location>
</feature>
<feature type="zinc finger region" description="CCHC-type 2; atypical" evidence="11">
    <location>
        <begin position="172"/>
        <end position="195"/>
    </location>
</feature>
<feature type="region of interest" description="Disordered" evidence="5">
    <location>
        <begin position="20"/>
        <end position="53"/>
    </location>
</feature>
<feature type="region of interest" description="SHR-binding" evidence="1">
    <location>
        <begin position="182"/>
        <end position="194"/>
    </location>
</feature>
<feature type="region of interest" description="Disordered" evidence="5">
    <location>
        <begin position="425"/>
        <end position="446"/>
    </location>
</feature>
<feature type="short sequence motif" description="Nuclear localization signal" evidence="4">
    <location>
        <begin position="132"/>
        <end position="139"/>
    </location>
</feature>
<feature type="compositionally biased region" description="Polar residues" evidence="5">
    <location>
        <begin position="427"/>
        <end position="446"/>
    </location>
</feature>
<feature type="binding site" evidence="1">
    <location>
        <position position="147"/>
    </location>
    <ligand>
        <name>Zn(2+)</name>
        <dbReference type="ChEBI" id="CHEBI:29105"/>
        <label>1</label>
    </ligand>
</feature>
<feature type="binding site" evidence="1">
    <location>
        <position position="150"/>
    </location>
    <ligand>
        <name>Zn(2+)</name>
        <dbReference type="ChEBI" id="CHEBI:29105"/>
        <label>1</label>
    </ligand>
</feature>
<feature type="binding site" evidence="1">
    <location>
        <position position="163"/>
    </location>
    <ligand>
        <name>Zn(2+)</name>
        <dbReference type="ChEBI" id="CHEBI:29105"/>
        <label>1</label>
    </ligand>
</feature>
<feature type="binding site" evidence="1">
    <location>
        <position position="167"/>
    </location>
    <ligand>
        <name>Zn(2+)</name>
        <dbReference type="ChEBI" id="CHEBI:29105"/>
        <label>1</label>
    </ligand>
</feature>
<feature type="binding site" evidence="1">
    <location>
        <position position="174"/>
    </location>
    <ligand>
        <name>Zn(2+)</name>
        <dbReference type="ChEBI" id="CHEBI:29105"/>
        <label>2</label>
    </ligand>
</feature>
<feature type="binding site" evidence="1">
    <location>
        <position position="176"/>
    </location>
    <ligand>
        <name>Zn(2+)</name>
        <dbReference type="ChEBI" id="CHEBI:29105"/>
        <label>2</label>
    </ligand>
</feature>
<feature type="binding site" evidence="1">
    <location>
        <position position="189"/>
    </location>
    <ligand>
        <name>Zn(2+)</name>
        <dbReference type="ChEBI" id="CHEBI:29105"/>
        <label>2</label>
    </ligand>
</feature>
<feature type="binding site" evidence="1">
    <location>
        <position position="193"/>
    </location>
    <ligand>
        <name>Zn(2+)</name>
        <dbReference type="ChEBI" id="CHEBI:29105"/>
        <label>2</label>
    </ligand>
</feature>
<feature type="modified residue" description="Phosphoserine" evidence="2">
    <location>
        <position position="58"/>
    </location>
</feature>
<feature type="helix" evidence="14">
    <location>
        <begin position="354"/>
        <end position="363"/>
    </location>
</feature>
<keyword id="KW-0002">3D-structure</keyword>
<keyword id="KW-0010">Activator</keyword>
<keyword id="KW-0238">DNA-binding</keyword>
<keyword id="KW-0479">Metal-binding</keyword>
<keyword id="KW-0539">Nucleus</keyword>
<keyword id="KW-0597">Phosphoprotein</keyword>
<keyword id="KW-1185">Reference proteome</keyword>
<keyword id="KW-0677">Repeat</keyword>
<keyword id="KW-0804">Transcription</keyword>
<keyword id="KW-0805">Transcription regulation</keyword>
<keyword id="KW-0862">Zinc</keyword>
<keyword id="KW-0863">Zinc-finger</keyword>
<name>IDD9_ARATH</name>
<accession>Q944L3</accession>
<accession>Q9M3F1</accession>
<protein>
    <recommendedName>
        <fullName evidence="9">Zinc finger protein BALDIBIS</fullName>
    </recommendedName>
    <alternativeName>
        <fullName evidence="10">ID1-like zinc finger protein 1</fullName>
    </alternativeName>
    <alternativeName>
        <fullName evidence="8">Protein indeterminate-domain 9</fullName>
    </alternativeName>
</protein>
<gene>
    <name evidence="9" type="primary">BIB</name>
    <name evidence="8" type="synonym">IDD9</name>
    <name evidence="10" type="synonym">IDZ1</name>
    <name evidence="12" type="ordered locus">At3g45260</name>
    <name evidence="13" type="ORF">F18N11.20</name>
</gene>
<reference key="1">
    <citation type="submission" date="2004-01" db="EMBL/GenBank/DDBJ databases">
        <title>INDETERMINATE1-like genes in Arabidopsis.</title>
        <authorList>
            <person name="Dewald M."/>
            <person name="Fritz J."/>
            <person name="Merkle T."/>
        </authorList>
    </citation>
    <scope>NUCLEOTIDE SEQUENCE [MRNA]</scope>
</reference>
<reference key="2">
    <citation type="journal article" date="2000" name="Nature">
        <title>Sequence and analysis of chromosome 3 of the plant Arabidopsis thaliana.</title>
        <authorList>
            <person name="Salanoubat M."/>
            <person name="Lemcke K."/>
            <person name="Rieger M."/>
            <person name="Ansorge W."/>
            <person name="Unseld M."/>
            <person name="Fartmann B."/>
            <person name="Valle G."/>
            <person name="Bloecker H."/>
            <person name="Perez-Alonso M."/>
            <person name="Obermaier B."/>
            <person name="Delseny M."/>
            <person name="Boutry M."/>
            <person name="Grivell L.A."/>
            <person name="Mache R."/>
            <person name="Puigdomenech P."/>
            <person name="De Simone V."/>
            <person name="Choisne N."/>
            <person name="Artiguenave F."/>
            <person name="Robert C."/>
            <person name="Brottier P."/>
            <person name="Wincker P."/>
            <person name="Cattolico L."/>
            <person name="Weissenbach J."/>
            <person name="Saurin W."/>
            <person name="Quetier F."/>
            <person name="Schaefer M."/>
            <person name="Mueller-Auer S."/>
            <person name="Gabel C."/>
            <person name="Fuchs M."/>
            <person name="Benes V."/>
            <person name="Wurmbach E."/>
            <person name="Drzonek H."/>
            <person name="Erfle H."/>
            <person name="Jordan N."/>
            <person name="Bangert S."/>
            <person name="Wiedelmann R."/>
            <person name="Kranz H."/>
            <person name="Voss H."/>
            <person name="Holland R."/>
            <person name="Brandt P."/>
            <person name="Nyakatura G."/>
            <person name="Vezzi A."/>
            <person name="D'Angelo M."/>
            <person name="Pallavicini A."/>
            <person name="Toppo S."/>
            <person name="Simionati B."/>
            <person name="Conrad A."/>
            <person name="Hornischer K."/>
            <person name="Kauer G."/>
            <person name="Loehnert T.-H."/>
            <person name="Nordsiek G."/>
            <person name="Reichelt J."/>
            <person name="Scharfe M."/>
            <person name="Schoen O."/>
            <person name="Bargues M."/>
            <person name="Terol J."/>
            <person name="Climent J."/>
            <person name="Navarro P."/>
            <person name="Collado C."/>
            <person name="Perez-Perez A."/>
            <person name="Ottenwaelder B."/>
            <person name="Duchemin D."/>
            <person name="Cooke R."/>
            <person name="Laudie M."/>
            <person name="Berger-Llauro C."/>
            <person name="Purnelle B."/>
            <person name="Masuy D."/>
            <person name="de Haan M."/>
            <person name="Maarse A.C."/>
            <person name="Alcaraz J.-P."/>
            <person name="Cottet A."/>
            <person name="Casacuberta E."/>
            <person name="Monfort A."/>
            <person name="Argiriou A."/>
            <person name="Flores M."/>
            <person name="Liguori R."/>
            <person name="Vitale D."/>
            <person name="Mannhaupt G."/>
            <person name="Haase D."/>
            <person name="Schoof H."/>
            <person name="Rudd S."/>
            <person name="Zaccaria P."/>
            <person name="Mewes H.-W."/>
            <person name="Mayer K.F.X."/>
            <person name="Kaul S."/>
            <person name="Town C.D."/>
            <person name="Koo H.L."/>
            <person name="Tallon L.J."/>
            <person name="Jenkins J."/>
            <person name="Rooney T."/>
            <person name="Rizzo M."/>
            <person name="Walts A."/>
            <person name="Utterback T."/>
            <person name="Fujii C.Y."/>
            <person name="Shea T.P."/>
            <person name="Creasy T.H."/>
            <person name="Haas B."/>
            <person name="Maiti R."/>
            <person name="Wu D."/>
            <person name="Peterson J."/>
            <person name="Van Aken S."/>
            <person name="Pai G."/>
            <person name="Militscher J."/>
            <person name="Sellers P."/>
            <person name="Gill J.E."/>
            <person name="Feldblyum T.V."/>
            <person name="Preuss D."/>
            <person name="Lin X."/>
            <person name="Nierman W.C."/>
            <person name="Salzberg S.L."/>
            <person name="White O."/>
            <person name="Venter J.C."/>
            <person name="Fraser C.M."/>
            <person name="Kaneko T."/>
            <person name="Nakamura Y."/>
            <person name="Sato S."/>
            <person name="Kato T."/>
            <person name="Asamizu E."/>
            <person name="Sasamoto S."/>
            <person name="Kimura T."/>
            <person name="Idesawa K."/>
            <person name="Kawashima K."/>
            <person name="Kishida Y."/>
            <person name="Kiyokawa C."/>
            <person name="Kohara M."/>
            <person name="Matsumoto M."/>
            <person name="Matsuno A."/>
            <person name="Muraki A."/>
            <person name="Nakayama S."/>
            <person name="Nakazaki N."/>
            <person name="Shinpo S."/>
            <person name="Takeuchi C."/>
            <person name="Wada T."/>
            <person name="Watanabe A."/>
            <person name="Yamada M."/>
            <person name="Yasuda M."/>
            <person name="Tabata S."/>
        </authorList>
    </citation>
    <scope>NUCLEOTIDE SEQUENCE [LARGE SCALE GENOMIC DNA]</scope>
    <source>
        <strain>cv. Columbia</strain>
    </source>
</reference>
<reference key="3">
    <citation type="journal article" date="2017" name="Plant J.">
        <title>Araport11: a complete reannotation of the Arabidopsis thaliana reference genome.</title>
        <authorList>
            <person name="Cheng C.Y."/>
            <person name="Krishnakumar V."/>
            <person name="Chan A.P."/>
            <person name="Thibaud-Nissen F."/>
            <person name="Schobel S."/>
            <person name="Town C.D."/>
        </authorList>
    </citation>
    <scope>GENOME REANNOTATION</scope>
    <source>
        <strain>cv. Columbia</strain>
    </source>
</reference>
<reference key="4">
    <citation type="journal article" date="2003" name="Science">
        <title>Empirical analysis of transcriptional activity in the Arabidopsis genome.</title>
        <authorList>
            <person name="Yamada K."/>
            <person name="Lim J."/>
            <person name="Dale J.M."/>
            <person name="Chen H."/>
            <person name="Shinn P."/>
            <person name="Palm C.J."/>
            <person name="Southwick A.M."/>
            <person name="Wu H.C."/>
            <person name="Kim C.J."/>
            <person name="Nguyen M."/>
            <person name="Pham P.K."/>
            <person name="Cheuk R.F."/>
            <person name="Karlin-Newmann G."/>
            <person name="Liu S.X."/>
            <person name="Lam B."/>
            <person name="Sakano H."/>
            <person name="Wu T."/>
            <person name="Yu G."/>
            <person name="Miranda M."/>
            <person name="Quach H.L."/>
            <person name="Tripp M."/>
            <person name="Chang C.H."/>
            <person name="Lee J.M."/>
            <person name="Toriumi M.J."/>
            <person name="Chan M.M."/>
            <person name="Tang C.C."/>
            <person name="Onodera C.S."/>
            <person name="Deng J.M."/>
            <person name="Akiyama K."/>
            <person name="Ansari Y."/>
            <person name="Arakawa T."/>
            <person name="Banh J."/>
            <person name="Banno F."/>
            <person name="Bowser L."/>
            <person name="Brooks S.Y."/>
            <person name="Carninci P."/>
            <person name="Chao Q."/>
            <person name="Choy N."/>
            <person name="Enju A."/>
            <person name="Goldsmith A.D."/>
            <person name="Gurjal M."/>
            <person name="Hansen N.F."/>
            <person name="Hayashizaki Y."/>
            <person name="Johnson-Hopson C."/>
            <person name="Hsuan V.W."/>
            <person name="Iida K."/>
            <person name="Karnes M."/>
            <person name="Khan S."/>
            <person name="Koesema E."/>
            <person name="Ishida J."/>
            <person name="Jiang P.X."/>
            <person name="Jones T."/>
            <person name="Kawai J."/>
            <person name="Kamiya A."/>
            <person name="Meyers C."/>
            <person name="Nakajima M."/>
            <person name="Narusaka M."/>
            <person name="Seki M."/>
            <person name="Sakurai T."/>
            <person name="Satou M."/>
            <person name="Tamse R."/>
            <person name="Vaysberg M."/>
            <person name="Wallender E.K."/>
            <person name="Wong C."/>
            <person name="Yamamura Y."/>
            <person name="Yuan S."/>
            <person name="Shinozaki K."/>
            <person name="Davis R.W."/>
            <person name="Theologis A."/>
            <person name="Ecker J.R."/>
        </authorList>
    </citation>
    <scope>NUCLEOTIDE SEQUENCE [LARGE SCALE MRNA]</scope>
    <source>
        <strain>cv. Columbia</strain>
    </source>
</reference>
<reference key="5">
    <citation type="journal article" date="2006" name="BMC Genomics">
        <title>The maize INDETERMINATE1 flowering time regulator defines a highly conserved zinc finger protein family in higher plants.</title>
        <authorList>
            <person name="Colasanti J."/>
            <person name="Tremblay R."/>
            <person name="Wong A.Y."/>
            <person name="Coneva V."/>
            <person name="Kozaki A."/>
            <person name="Mable B.K."/>
        </authorList>
    </citation>
    <scope>GENE FAMILY</scope>
    <scope>NOMENCLATURE</scope>
</reference>
<reference key="6">
    <citation type="journal article" date="2014" name="Proc. Natl. Acad. Sci. U.S.A.">
        <title>DELLA protein functions as a transcriptional activator through the DNA binding of the indeterminate domain family proteins.</title>
        <authorList>
            <person name="Yoshida H."/>
            <person name="Hirano K."/>
            <person name="Sato T."/>
            <person name="Mitsuda N."/>
            <person name="Nomoto M."/>
            <person name="Maeo K."/>
            <person name="Koketsu E."/>
            <person name="Mitani R."/>
            <person name="Kawamura M."/>
            <person name="Ishiguro S."/>
            <person name="Tada Y."/>
            <person name="Ohme-Takagi M."/>
            <person name="Matsuoka M."/>
            <person name="Ueguchi-Tanaka M."/>
        </authorList>
    </citation>
    <scope>FUNCTION</scope>
    <scope>INTERACTION WITH RGA AND SCL3</scope>
    <scope>SUBCELLULAR LOCATION</scope>
</reference>
<reference key="7">
    <citation type="journal article" date="2015" name="Plant Cell">
        <title>Arabidopsis BIRD zinc finger proteins jointly stabilize tissue boundaries by confining the cell fate regulator SHORT-ROOT and contributing to fate specification.</title>
        <authorList>
            <person name="Long Y."/>
            <person name="Smet W."/>
            <person name="Cruz-Ramirez A."/>
            <person name="Castelijns B."/>
            <person name="de Jonge W."/>
            <person name="Maehoenen A.P."/>
            <person name="Bouchet B.P."/>
            <person name="Perez G.S."/>
            <person name="Akhmanova A."/>
            <person name="Scheres B."/>
            <person name="Blilou I."/>
        </authorList>
    </citation>
    <scope>FUNCTION</scope>
    <scope>DISRUPTION PHENOTYPE</scope>
    <scope>TISSUE SPECIFICITY</scope>
    <scope>SUBCELLULAR LOCATION</scope>
    <source>
        <strain>cv. Columbia</strain>
    </source>
</reference>
<organism>
    <name type="scientific">Arabidopsis thaliana</name>
    <name type="common">Mouse-ear cress</name>
    <dbReference type="NCBI Taxonomy" id="3702"/>
    <lineage>
        <taxon>Eukaryota</taxon>
        <taxon>Viridiplantae</taxon>
        <taxon>Streptophyta</taxon>
        <taxon>Embryophyta</taxon>
        <taxon>Tracheophyta</taxon>
        <taxon>Spermatophyta</taxon>
        <taxon>Magnoliopsida</taxon>
        <taxon>eudicotyledons</taxon>
        <taxon>Gunneridae</taxon>
        <taxon>Pentapetalae</taxon>
        <taxon>rosids</taxon>
        <taxon>malvids</taxon>
        <taxon>Brassicales</taxon>
        <taxon>Brassicaceae</taxon>
        <taxon>Camelineae</taxon>
        <taxon>Arabidopsis</taxon>
    </lineage>
</organism>
<proteinExistence type="evidence at protein level"/>
<evidence type="ECO:0000250" key="1">
    <source>
        <dbReference type="UniProtKB" id="Q700D2"/>
    </source>
</evidence>
<evidence type="ECO:0000250" key="2">
    <source>
        <dbReference type="UniProtKB" id="Q8GYC1"/>
    </source>
</evidence>
<evidence type="ECO:0000255" key="3">
    <source>
        <dbReference type="PROSITE-ProRule" id="PRU00042"/>
    </source>
</evidence>
<evidence type="ECO:0000255" key="4">
    <source>
        <dbReference type="PROSITE-ProRule" id="PRU00768"/>
    </source>
</evidence>
<evidence type="ECO:0000256" key="5">
    <source>
        <dbReference type="SAM" id="MobiDB-lite"/>
    </source>
</evidence>
<evidence type="ECO:0000269" key="6">
    <source>
    </source>
</evidence>
<evidence type="ECO:0000269" key="7">
    <source>
    </source>
</evidence>
<evidence type="ECO:0000303" key="8">
    <source>
    </source>
</evidence>
<evidence type="ECO:0000303" key="9">
    <source>
    </source>
</evidence>
<evidence type="ECO:0000303" key="10">
    <source ref="1"/>
</evidence>
<evidence type="ECO:0000305" key="11"/>
<evidence type="ECO:0000312" key="12">
    <source>
        <dbReference type="Araport" id="AT3G45260"/>
    </source>
</evidence>
<evidence type="ECO:0000312" key="13">
    <source>
        <dbReference type="EMBL" id="CAB72475.1"/>
    </source>
</evidence>
<evidence type="ECO:0007829" key="14">
    <source>
        <dbReference type="PDB" id="6KPD"/>
    </source>
</evidence>